<feature type="chain" id="PRO_1000136453" description="Putative pyruvate, phosphate dikinase regulatory protein">
    <location>
        <begin position="1"/>
        <end position="270"/>
    </location>
</feature>
<feature type="binding site" evidence="1">
    <location>
        <begin position="148"/>
        <end position="155"/>
    </location>
    <ligand>
        <name>ADP</name>
        <dbReference type="ChEBI" id="CHEBI:456216"/>
    </ligand>
</feature>
<gene>
    <name type="ordered locus">BCB4264_A4413</name>
</gene>
<dbReference type="EC" id="2.7.11.32" evidence="1"/>
<dbReference type="EC" id="2.7.4.27" evidence="1"/>
<dbReference type="EMBL" id="CP001176">
    <property type="protein sequence ID" value="ACK62343.1"/>
    <property type="molecule type" value="Genomic_DNA"/>
</dbReference>
<dbReference type="RefSeq" id="WP_000368944.1">
    <property type="nucleotide sequence ID" value="NZ_VEHB01000006.1"/>
</dbReference>
<dbReference type="SMR" id="B7HCS0"/>
<dbReference type="KEGG" id="bcb:BCB4264_A4413"/>
<dbReference type="HOGENOM" id="CLU_046206_2_1_9"/>
<dbReference type="Proteomes" id="UP000007096">
    <property type="component" value="Chromosome"/>
</dbReference>
<dbReference type="GO" id="GO:0043531">
    <property type="term" value="F:ADP binding"/>
    <property type="evidence" value="ECO:0007669"/>
    <property type="project" value="UniProtKB-UniRule"/>
</dbReference>
<dbReference type="GO" id="GO:0005524">
    <property type="term" value="F:ATP binding"/>
    <property type="evidence" value="ECO:0007669"/>
    <property type="project" value="InterPro"/>
</dbReference>
<dbReference type="GO" id="GO:0016776">
    <property type="term" value="F:phosphotransferase activity, phosphate group as acceptor"/>
    <property type="evidence" value="ECO:0007669"/>
    <property type="project" value="UniProtKB-UniRule"/>
</dbReference>
<dbReference type="GO" id="GO:0004674">
    <property type="term" value="F:protein serine/threonine kinase activity"/>
    <property type="evidence" value="ECO:0007669"/>
    <property type="project" value="UniProtKB-UniRule"/>
</dbReference>
<dbReference type="HAMAP" id="MF_00921">
    <property type="entry name" value="PDRP"/>
    <property type="match status" value="1"/>
</dbReference>
<dbReference type="InterPro" id="IPR005177">
    <property type="entry name" value="Kinase-pyrophosphorylase"/>
</dbReference>
<dbReference type="InterPro" id="IPR026565">
    <property type="entry name" value="PPDK_reg"/>
</dbReference>
<dbReference type="NCBIfam" id="NF003742">
    <property type="entry name" value="PRK05339.1"/>
    <property type="match status" value="1"/>
</dbReference>
<dbReference type="PANTHER" id="PTHR31756">
    <property type="entry name" value="PYRUVATE, PHOSPHATE DIKINASE REGULATORY PROTEIN 1, CHLOROPLASTIC"/>
    <property type="match status" value="1"/>
</dbReference>
<dbReference type="PANTHER" id="PTHR31756:SF3">
    <property type="entry name" value="PYRUVATE, PHOSPHATE DIKINASE REGULATORY PROTEIN 1, CHLOROPLASTIC"/>
    <property type="match status" value="1"/>
</dbReference>
<dbReference type="Pfam" id="PF03618">
    <property type="entry name" value="Kinase-PPPase"/>
    <property type="match status" value="1"/>
</dbReference>
<proteinExistence type="inferred from homology"/>
<reference key="1">
    <citation type="submission" date="2008-10" db="EMBL/GenBank/DDBJ databases">
        <title>Genome sequence of Bacillus cereus B4264.</title>
        <authorList>
            <person name="Dodson R.J."/>
            <person name="Durkin A.S."/>
            <person name="Rosovitz M.J."/>
            <person name="Rasko D.A."/>
            <person name="Hoffmaster A."/>
            <person name="Ravel J."/>
            <person name="Sutton G."/>
        </authorList>
    </citation>
    <scope>NUCLEOTIDE SEQUENCE [LARGE SCALE GENOMIC DNA]</scope>
    <source>
        <strain>B4264</strain>
    </source>
</reference>
<protein>
    <recommendedName>
        <fullName evidence="1">Putative pyruvate, phosphate dikinase regulatory protein</fullName>
        <shortName evidence="1">PPDK regulatory protein</shortName>
        <ecNumber evidence="1">2.7.11.32</ecNumber>
        <ecNumber evidence="1">2.7.4.27</ecNumber>
    </recommendedName>
</protein>
<evidence type="ECO:0000255" key="1">
    <source>
        <dbReference type="HAMAP-Rule" id="MF_00921"/>
    </source>
</evidence>
<sequence length="270" mass="30335">MDNKIVYVVSDSVGETADLVVRAAMGQFPFAPDIRRVPYVEDTGTLKEVISIAKSNQALICFTLVKPDMRQYLVTEAAKEGVEAYDIIGPLIDQIEEITGQVPRYEPGVVRRLDEEYFKKIEAIEFAVKYDDGRDARGILKADIVLIGVSRTSKTPLSQYLAHNKRLKVANVPLVPEVDPPEELYQVAKEKCFGLKITPDKLNHIRKERLKSLGLSDGATYANINRIQEEIDHFEEVISKINCQVIDVSNKAIEETANIIVNAVQNQKMF</sequence>
<organism>
    <name type="scientific">Bacillus cereus (strain B4264)</name>
    <dbReference type="NCBI Taxonomy" id="405532"/>
    <lineage>
        <taxon>Bacteria</taxon>
        <taxon>Bacillati</taxon>
        <taxon>Bacillota</taxon>
        <taxon>Bacilli</taxon>
        <taxon>Bacillales</taxon>
        <taxon>Bacillaceae</taxon>
        <taxon>Bacillus</taxon>
        <taxon>Bacillus cereus group</taxon>
    </lineage>
</organism>
<keyword id="KW-0418">Kinase</keyword>
<keyword id="KW-0547">Nucleotide-binding</keyword>
<keyword id="KW-0723">Serine/threonine-protein kinase</keyword>
<keyword id="KW-0808">Transferase</keyword>
<accession>B7HCS0</accession>
<name>PDRP_BACC4</name>
<comment type="function">
    <text evidence="1">Bifunctional serine/threonine kinase and phosphorylase involved in the regulation of the pyruvate, phosphate dikinase (PPDK) by catalyzing its phosphorylation/dephosphorylation.</text>
</comment>
<comment type="catalytic activity">
    <reaction evidence="1">
        <text>N(tele)-phospho-L-histidyl/L-threonyl-[pyruvate, phosphate dikinase] + ADP = N(tele)-phospho-L-histidyl/O-phospho-L-threonyl-[pyruvate, phosphate dikinase] + AMP + H(+)</text>
        <dbReference type="Rhea" id="RHEA:43692"/>
        <dbReference type="Rhea" id="RHEA-COMP:10650"/>
        <dbReference type="Rhea" id="RHEA-COMP:10651"/>
        <dbReference type="ChEBI" id="CHEBI:15378"/>
        <dbReference type="ChEBI" id="CHEBI:30013"/>
        <dbReference type="ChEBI" id="CHEBI:61977"/>
        <dbReference type="ChEBI" id="CHEBI:83586"/>
        <dbReference type="ChEBI" id="CHEBI:456215"/>
        <dbReference type="ChEBI" id="CHEBI:456216"/>
        <dbReference type="EC" id="2.7.11.32"/>
    </reaction>
</comment>
<comment type="catalytic activity">
    <reaction evidence="1">
        <text>N(tele)-phospho-L-histidyl/O-phospho-L-threonyl-[pyruvate, phosphate dikinase] + phosphate + H(+) = N(tele)-phospho-L-histidyl/L-threonyl-[pyruvate, phosphate dikinase] + diphosphate</text>
        <dbReference type="Rhea" id="RHEA:43696"/>
        <dbReference type="Rhea" id="RHEA-COMP:10650"/>
        <dbReference type="Rhea" id="RHEA-COMP:10651"/>
        <dbReference type="ChEBI" id="CHEBI:15378"/>
        <dbReference type="ChEBI" id="CHEBI:30013"/>
        <dbReference type="ChEBI" id="CHEBI:33019"/>
        <dbReference type="ChEBI" id="CHEBI:43474"/>
        <dbReference type="ChEBI" id="CHEBI:61977"/>
        <dbReference type="ChEBI" id="CHEBI:83586"/>
        <dbReference type="EC" id="2.7.4.27"/>
    </reaction>
</comment>
<comment type="similarity">
    <text evidence="1">Belongs to the pyruvate, phosphate/water dikinase regulatory protein family. PDRP subfamily.</text>
</comment>